<keyword id="KW-1048">Host nucleus</keyword>
<keyword id="KW-0964">Secreted</keyword>
<keyword id="KW-0732">Signal</keyword>
<keyword id="KW-0843">Virulence</keyword>
<reference key="1">
    <citation type="journal article" date="2016" name="Front. Microbiol.">
        <title>Studying the mechanism of Plasmopara viticola RxLR effectors on suppressing plant immunity.</title>
        <authorList>
            <person name="Xiang J."/>
            <person name="Li X."/>
            <person name="Wu J."/>
            <person name="Yin L."/>
            <person name="Zhang Y."/>
            <person name="Lu J."/>
        </authorList>
    </citation>
    <scope>NUCLEOTIDE SEQUENCE [MRNA]</scope>
    <scope>INDUCTION</scope>
    <scope>FUNCTION</scope>
    <scope>SUBCELLULAR LOCATION</scope>
    <scope>DOMAIN</scope>
    <source>
        <strain>ZJ-1-1</strain>
    </source>
</reference>
<protein>
    <recommendedName>
        <fullName evidence="3">Secreted RxLR effector protein 63</fullName>
    </recommendedName>
</protein>
<sequence>MQRFPYSLLLLLLSATNRSRRHHITRPGRSIHWCLVRPTRPNRMLRAIRTCGARYWRNWPLNWPRKAGLTRRSSARIGLSDALRPCPTLFGCFKRRYARQAMSCYCRTEWRVNWLKKKRRGSSRWRRESSVWRCWK</sequence>
<dbReference type="EMBL" id="KX010964">
    <property type="protein sequence ID" value="ANC73384.1"/>
    <property type="molecule type" value="mRNA"/>
</dbReference>
<dbReference type="GO" id="GO:0005576">
    <property type="term" value="C:extracellular region"/>
    <property type="evidence" value="ECO:0007669"/>
    <property type="project" value="UniProtKB-SubCell"/>
</dbReference>
<dbReference type="GO" id="GO:0042025">
    <property type="term" value="C:host cell nucleus"/>
    <property type="evidence" value="ECO:0007669"/>
    <property type="project" value="UniProtKB-SubCell"/>
</dbReference>
<evidence type="ECO:0000255" key="1"/>
<evidence type="ECO:0000269" key="2">
    <source>
    </source>
</evidence>
<evidence type="ECO:0000303" key="3">
    <source>
    </source>
</evidence>
<evidence type="ECO:0000305" key="4"/>
<evidence type="ECO:0000305" key="5">
    <source>
    </source>
</evidence>
<name>RLR63_PLAVT</name>
<feature type="signal peptide" evidence="1">
    <location>
        <begin position="1"/>
        <end position="21"/>
    </location>
</feature>
<feature type="chain" id="PRO_5007999409" description="Secreted RxLR effector protein 63">
    <location>
        <begin position="22"/>
        <end position="136"/>
    </location>
</feature>
<feature type="short sequence motif" description="RxLR" evidence="5">
    <location>
        <begin position="43"/>
        <end position="46"/>
    </location>
</feature>
<gene>
    <name evidence="3" type="primary">RxLR63</name>
</gene>
<accession>A0A172M490</accession>
<organism>
    <name type="scientific">Plasmopara viticola</name>
    <name type="common">Downy mildew of grapevine</name>
    <name type="synonym">Botrytis viticola</name>
    <dbReference type="NCBI Taxonomy" id="143451"/>
    <lineage>
        <taxon>Eukaryota</taxon>
        <taxon>Sar</taxon>
        <taxon>Stramenopiles</taxon>
        <taxon>Oomycota</taxon>
        <taxon>Peronosporales</taxon>
        <taxon>Peronosporaceae</taxon>
        <taxon>Plasmopara</taxon>
    </lineage>
</organism>
<comment type="function">
    <text evidence="2">Effector that partially suppresses the tobacco programmed cell death induced by cell death-inducing proteins.</text>
</comment>
<comment type="subcellular location">
    <subcellularLocation>
        <location evidence="2">Secreted</location>
    </subcellularLocation>
    <subcellularLocation>
        <location evidence="2">Host nucleus</location>
    </subcellularLocation>
</comment>
<comment type="induction">
    <text evidence="2">Expression is up-regulated at later stages of infection.</text>
</comment>
<comment type="domain">
    <text evidence="5">Has a conserved RxLR motif that acts to carry the protein into the host cell cytoplasm. Lacks the 'so-called' EER motif, which is found closely behind the RxLR motif in most of RxLR effector family members, but the presence of an EER motif is not always essential for the translocation of every RxLR effector into host cells, or for inducing a hypersensitive response.</text>
</comment>
<comment type="similarity">
    <text evidence="4">Belongs to the RxLR effector family.</text>
</comment>
<proteinExistence type="evidence at transcript level"/>